<evidence type="ECO:0000250" key="1"/>
<evidence type="ECO:0000255" key="2"/>
<evidence type="ECO:0000256" key="3">
    <source>
        <dbReference type="SAM" id="MobiDB-lite"/>
    </source>
</evidence>
<evidence type="ECO:0000269" key="4">
    <source>
    </source>
</evidence>
<evidence type="ECO:0000305" key="5"/>
<proteinExistence type="evidence at transcript level"/>
<sequence length="288" mass="30498">MAKDIEASAPEGGEFSAKDYTDPPPAPLIDVEELTKWSLYRAVIAEFIATLLFLYITVATVIGYKHQSDATVNTTDAACSGVGILGIAWAFGGMIFILVYCTAGISGGHINPAVTFGLFLARKVSLIRAVLYIIAQCLGAICGVGLVKGFQSSYYARYGGGANELSDGYSKGTGLGAEIIGTFVLVYTVFSATDPKRNARDSHIPVLAPLPIGFAVFMVHLATIPITGTGINPARSLGTAVIYNKDKAWDDQWIFWVGPLIGAAIAAAYHQYVLRASAAKLGSYRSNA</sequence>
<name>PIP22_ORYSJ</name>
<reference key="1">
    <citation type="journal article" date="2005" name="Nature">
        <title>The map-based sequence of the rice genome.</title>
        <authorList>
            <consortium name="International rice genome sequencing project (IRGSP)"/>
        </authorList>
    </citation>
    <scope>NUCLEOTIDE SEQUENCE [LARGE SCALE GENOMIC DNA]</scope>
    <source>
        <strain>cv. Nipponbare</strain>
    </source>
</reference>
<reference key="2">
    <citation type="journal article" date="2008" name="Nucleic Acids Res.">
        <title>The rice annotation project database (RAP-DB): 2008 update.</title>
        <authorList>
            <consortium name="The rice annotation project (RAP)"/>
        </authorList>
    </citation>
    <scope>GENOME REANNOTATION</scope>
    <source>
        <strain>cv. Nipponbare</strain>
    </source>
</reference>
<reference key="3">
    <citation type="journal article" date="2013" name="Rice">
        <title>Improvement of the Oryza sativa Nipponbare reference genome using next generation sequence and optical map data.</title>
        <authorList>
            <person name="Kawahara Y."/>
            <person name="de la Bastide M."/>
            <person name="Hamilton J.P."/>
            <person name="Kanamori H."/>
            <person name="McCombie W.R."/>
            <person name="Ouyang S."/>
            <person name="Schwartz D.C."/>
            <person name="Tanaka T."/>
            <person name="Wu J."/>
            <person name="Zhou S."/>
            <person name="Childs K.L."/>
            <person name="Davidson R.M."/>
            <person name="Lin H."/>
            <person name="Quesada-Ocampo L."/>
            <person name="Vaillancourt B."/>
            <person name="Sakai H."/>
            <person name="Lee S.S."/>
            <person name="Kim J."/>
            <person name="Numa H."/>
            <person name="Itoh T."/>
            <person name="Buell C.R."/>
            <person name="Matsumoto T."/>
        </authorList>
    </citation>
    <scope>GENOME REANNOTATION</scope>
    <source>
        <strain>cv. Nipponbare</strain>
    </source>
</reference>
<reference key="4">
    <citation type="journal article" date="2003" name="Science">
        <title>Collection, mapping, and annotation of over 28,000 cDNA clones from japonica rice.</title>
        <authorList>
            <consortium name="The rice full-length cDNA consortium"/>
        </authorList>
    </citation>
    <scope>NUCLEOTIDE SEQUENCE [LARGE SCALE MRNA]</scope>
    <source>
        <strain>cv. Nipponbare</strain>
    </source>
</reference>
<reference key="5">
    <citation type="journal article" date="2005" name="Plant Cell Physiol.">
        <title>Identification of 33 rice aquaporin genes and analysis of their expression and function.</title>
        <authorList>
            <person name="Sakurai J."/>
            <person name="Ishikawa F."/>
            <person name="Yamaguchi T."/>
            <person name="Uemura M."/>
            <person name="Maeshima M."/>
        </authorList>
    </citation>
    <scope>NOMENCLATURE</scope>
    <scope>TISSUE SPECIFICITY</scope>
    <scope>INDUCTION</scope>
</reference>
<dbReference type="EMBL" id="AP006168">
    <property type="protein sequence ID" value="BAD23735.1"/>
    <property type="molecule type" value="Genomic_DNA"/>
</dbReference>
<dbReference type="EMBL" id="AP008208">
    <property type="protein sequence ID" value="BAF09405.1"/>
    <property type="molecule type" value="Genomic_DNA"/>
</dbReference>
<dbReference type="EMBL" id="AP014958">
    <property type="protein sequence ID" value="BAS79886.1"/>
    <property type="molecule type" value="Genomic_DNA"/>
</dbReference>
<dbReference type="EMBL" id="AK061782">
    <property type="protein sequence ID" value="BAG88109.1"/>
    <property type="molecule type" value="mRNA"/>
</dbReference>
<dbReference type="RefSeq" id="XP_015626399.1">
    <property type="nucleotide sequence ID" value="XM_015770913.1"/>
</dbReference>
<dbReference type="SMR" id="Q6K215"/>
<dbReference type="FunCoup" id="Q6K215">
    <property type="interactions" value="289"/>
</dbReference>
<dbReference type="STRING" id="39947.Q6K215"/>
<dbReference type="PaxDb" id="39947-Q6K215"/>
<dbReference type="EnsemblPlants" id="Os02t0629200-02">
    <property type="protein sequence ID" value="Os02t0629200-02"/>
    <property type="gene ID" value="Os02g0629200"/>
</dbReference>
<dbReference type="Gramene" id="Os02t0629200-02">
    <property type="protein sequence ID" value="Os02t0629200-02"/>
    <property type="gene ID" value="Os02g0629200"/>
</dbReference>
<dbReference type="KEGG" id="dosa:Os02g0629200"/>
<dbReference type="eggNOG" id="KOG0223">
    <property type="taxonomic scope" value="Eukaryota"/>
</dbReference>
<dbReference type="HOGENOM" id="CLU_020019_3_0_1"/>
<dbReference type="InParanoid" id="Q6K215"/>
<dbReference type="OMA" id="RPPYMSS"/>
<dbReference type="OrthoDB" id="3222at2759"/>
<dbReference type="Proteomes" id="UP000000763">
    <property type="component" value="Chromosome 2"/>
</dbReference>
<dbReference type="Proteomes" id="UP000059680">
    <property type="component" value="Chromosome 2"/>
</dbReference>
<dbReference type="ExpressionAtlas" id="Q6K215">
    <property type="expression patterns" value="baseline and differential"/>
</dbReference>
<dbReference type="GO" id="GO:0005886">
    <property type="term" value="C:plasma membrane"/>
    <property type="evidence" value="ECO:0000318"/>
    <property type="project" value="GO_Central"/>
</dbReference>
<dbReference type="GO" id="GO:0015250">
    <property type="term" value="F:water channel activity"/>
    <property type="evidence" value="ECO:0000318"/>
    <property type="project" value="GO_Central"/>
</dbReference>
<dbReference type="CDD" id="cd00333">
    <property type="entry name" value="MIP"/>
    <property type="match status" value="1"/>
</dbReference>
<dbReference type="FunFam" id="1.20.1080.10:FF:000001">
    <property type="entry name" value="Probable aquaporin PIP1-2"/>
    <property type="match status" value="1"/>
</dbReference>
<dbReference type="Gene3D" id="1.20.1080.10">
    <property type="entry name" value="Glycerol uptake facilitator protein"/>
    <property type="match status" value="1"/>
</dbReference>
<dbReference type="InterPro" id="IPR023271">
    <property type="entry name" value="Aquaporin-like"/>
</dbReference>
<dbReference type="InterPro" id="IPR034294">
    <property type="entry name" value="Aquaporin_transptr"/>
</dbReference>
<dbReference type="InterPro" id="IPR000425">
    <property type="entry name" value="MIP"/>
</dbReference>
<dbReference type="InterPro" id="IPR022357">
    <property type="entry name" value="MIP_CS"/>
</dbReference>
<dbReference type="NCBIfam" id="TIGR00861">
    <property type="entry name" value="MIP"/>
    <property type="match status" value="1"/>
</dbReference>
<dbReference type="PANTHER" id="PTHR45687">
    <property type="entry name" value="AQUAPORIN OR AQUAGLYCEROPORIN RELATED"/>
    <property type="match status" value="1"/>
</dbReference>
<dbReference type="Pfam" id="PF00230">
    <property type="entry name" value="MIP"/>
    <property type="match status" value="1"/>
</dbReference>
<dbReference type="PRINTS" id="PR00783">
    <property type="entry name" value="MINTRINSICP"/>
</dbReference>
<dbReference type="SUPFAM" id="SSF81338">
    <property type="entry name" value="Aquaporin-like"/>
    <property type="match status" value="1"/>
</dbReference>
<dbReference type="PROSITE" id="PS00221">
    <property type="entry name" value="MIP"/>
    <property type="match status" value="1"/>
</dbReference>
<accession>Q6K215</accession>
<accession>B7E6W2</accession>
<accession>Q0DZD3</accession>
<gene>
    <name type="primary">PIP2-2</name>
    <name type="ordered locus">Os02g0629200</name>
    <name type="ordered locus">LOC_Os02g41860</name>
    <name type="ORF">B1469H02.22-1</name>
</gene>
<keyword id="KW-1003">Cell membrane</keyword>
<keyword id="KW-0472">Membrane</keyword>
<keyword id="KW-1185">Reference proteome</keyword>
<keyword id="KW-0677">Repeat</keyword>
<keyword id="KW-0812">Transmembrane</keyword>
<keyword id="KW-1133">Transmembrane helix</keyword>
<keyword id="KW-0813">Transport</keyword>
<feature type="chain" id="PRO_0000064035" description="Probable aquaporin PIP2-2">
    <location>
        <begin position="1"/>
        <end position="288"/>
    </location>
</feature>
<feature type="transmembrane region" description="Helical; Name=1" evidence="2">
    <location>
        <begin position="42"/>
        <end position="62"/>
    </location>
</feature>
<feature type="transmembrane region" description="Helical; Name=2" evidence="2">
    <location>
        <begin position="81"/>
        <end position="101"/>
    </location>
</feature>
<feature type="transmembrane region" description="Helical; Name=3" evidence="2">
    <location>
        <begin position="130"/>
        <end position="150"/>
    </location>
</feature>
<feature type="transmembrane region" description="Helical; Name=4" evidence="2">
    <location>
        <begin position="172"/>
        <end position="192"/>
    </location>
</feature>
<feature type="transmembrane region" description="Helical; Name=5" evidence="2">
    <location>
        <begin position="204"/>
        <end position="224"/>
    </location>
</feature>
<feature type="transmembrane region" description="Helical; Name=6" evidence="2">
    <location>
        <begin position="254"/>
        <end position="274"/>
    </location>
</feature>
<feature type="region of interest" description="Disordered" evidence="3">
    <location>
        <begin position="1"/>
        <end position="21"/>
    </location>
</feature>
<feature type="short sequence motif" description="NPA 1">
    <location>
        <begin position="111"/>
        <end position="113"/>
    </location>
</feature>
<feature type="short sequence motif" description="NPA 2">
    <location>
        <begin position="232"/>
        <end position="234"/>
    </location>
</feature>
<protein>
    <recommendedName>
        <fullName>Probable aquaporin PIP2-2</fullName>
    </recommendedName>
    <alternativeName>
        <fullName>OsPIP2;2</fullName>
    </alternativeName>
    <alternativeName>
        <fullName>Plasma membrane intrinsic protein 2-2</fullName>
    </alternativeName>
</protein>
<comment type="function">
    <text evidence="1">Aquaporins facilitate the transport of water and small neutral solutes across cell membranes.</text>
</comment>
<comment type="subcellular location">
    <subcellularLocation>
        <location evidence="1">Cell membrane</location>
        <topology evidence="1">Multi-pass membrane protein</topology>
    </subcellularLocation>
</comment>
<comment type="tissue specificity">
    <text evidence="4">Expressed in roots, leaves and anthers.</text>
</comment>
<comment type="induction">
    <text evidence="4">Down-regulated by chilling.</text>
</comment>
<comment type="domain">
    <text>Aquaporins contain two tandem repeats each containing three membrane-spanning domains and a pore-forming loop with the signature motif Asn-Pro-Ala (NPA).</text>
</comment>
<comment type="similarity">
    <text evidence="5">Belongs to the MIP/aquaporin (TC 1.A.8) family. PIP (TC 1.A.8.11) subfamily.</text>
</comment>
<organism>
    <name type="scientific">Oryza sativa subsp. japonica</name>
    <name type="common">Rice</name>
    <dbReference type="NCBI Taxonomy" id="39947"/>
    <lineage>
        <taxon>Eukaryota</taxon>
        <taxon>Viridiplantae</taxon>
        <taxon>Streptophyta</taxon>
        <taxon>Embryophyta</taxon>
        <taxon>Tracheophyta</taxon>
        <taxon>Spermatophyta</taxon>
        <taxon>Magnoliopsida</taxon>
        <taxon>Liliopsida</taxon>
        <taxon>Poales</taxon>
        <taxon>Poaceae</taxon>
        <taxon>BOP clade</taxon>
        <taxon>Oryzoideae</taxon>
        <taxon>Oryzeae</taxon>
        <taxon>Oryzinae</taxon>
        <taxon>Oryza</taxon>
        <taxon>Oryza sativa</taxon>
    </lineage>
</organism>